<dbReference type="EMBL" id="CP000713">
    <property type="protein sequence ID" value="ABQ93174.1"/>
    <property type="molecule type" value="Genomic_DNA"/>
</dbReference>
<dbReference type="SMR" id="A5WBY3"/>
<dbReference type="STRING" id="349106.PsycPRwf_0215"/>
<dbReference type="KEGG" id="prw:PsycPRwf_0215"/>
<dbReference type="eggNOG" id="COG3381">
    <property type="taxonomic scope" value="Bacteria"/>
</dbReference>
<dbReference type="HOGENOM" id="CLU_077650_4_0_6"/>
<dbReference type="GO" id="GO:0005737">
    <property type="term" value="C:cytoplasm"/>
    <property type="evidence" value="ECO:0007669"/>
    <property type="project" value="UniProtKB-SubCell"/>
</dbReference>
<dbReference type="GO" id="GO:0051259">
    <property type="term" value="P:protein complex oligomerization"/>
    <property type="evidence" value="ECO:0007669"/>
    <property type="project" value="InterPro"/>
</dbReference>
<dbReference type="GO" id="GO:0006457">
    <property type="term" value="P:protein folding"/>
    <property type="evidence" value="ECO:0007669"/>
    <property type="project" value="UniProtKB-UniRule"/>
</dbReference>
<dbReference type="Gene3D" id="1.20.120.1820">
    <property type="match status" value="1"/>
</dbReference>
<dbReference type="Gene3D" id="1.20.1280.20">
    <property type="entry name" value="HscB, C-terminal domain"/>
    <property type="match status" value="1"/>
</dbReference>
<dbReference type="HAMAP" id="MF_01150">
    <property type="entry name" value="TorD"/>
    <property type="match status" value="1"/>
</dbReference>
<dbReference type="InterPro" id="IPR023069">
    <property type="entry name" value="Chaperone_TorD"/>
</dbReference>
<dbReference type="InterPro" id="IPR020945">
    <property type="entry name" value="DMSO/NO3_reduct_chaperone"/>
</dbReference>
<dbReference type="InterPro" id="IPR036386">
    <property type="entry name" value="HscB_C_sf"/>
</dbReference>
<dbReference type="InterPro" id="IPR036411">
    <property type="entry name" value="TorD-like_sf"/>
</dbReference>
<dbReference type="InterPro" id="IPR050289">
    <property type="entry name" value="TorD/DmsD_chaperones"/>
</dbReference>
<dbReference type="NCBIfam" id="NF003442">
    <property type="entry name" value="PRK04976.1"/>
    <property type="match status" value="1"/>
</dbReference>
<dbReference type="PANTHER" id="PTHR34227:SF11">
    <property type="entry name" value="CHAPERONE PROTEIN TORD"/>
    <property type="match status" value="1"/>
</dbReference>
<dbReference type="PANTHER" id="PTHR34227">
    <property type="entry name" value="CHAPERONE PROTEIN YCDY"/>
    <property type="match status" value="1"/>
</dbReference>
<dbReference type="Pfam" id="PF02613">
    <property type="entry name" value="Nitrate_red_del"/>
    <property type="match status" value="1"/>
</dbReference>
<dbReference type="SUPFAM" id="SSF89155">
    <property type="entry name" value="TorD-like"/>
    <property type="match status" value="1"/>
</dbReference>
<organism>
    <name type="scientific">Psychrobacter sp. (strain PRwf-1)</name>
    <dbReference type="NCBI Taxonomy" id="349106"/>
    <lineage>
        <taxon>Bacteria</taxon>
        <taxon>Pseudomonadati</taxon>
        <taxon>Pseudomonadota</taxon>
        <taxon>Gammaproteobacteria</taxon>
        <taxon>Moraxellales</taxon>
        <taxon>Moraxellaceae</taxon>
        <taxon>Psychrobacter</taxon>
    </lineage>
</organism>
<feature type="chain" id="PRO_0000414897" description="Chaperone protein TorD">
    <location>
        <begin position="1"/>
        <end position="221"/>
    </location>
</feature>
<name>TORD_PSYWF</name>
<reference key="1">
    <citation type="submission" date="2007-05" db="EMBL/GenBank/DDBJ databases">
        <title>Complete sequence of chromosome of Psychrobacter sp. PRwf-1.</title>
        <authorList>
            <consortium name="US DOE Joint Genome Institute"/>
            <person name="Copeland A."/>
            <person name="Lucas S."/>
            <person name="Lapidus A."/>
            <person name="Barry K."/>
            <person name="Detter J.C."/>
            <person name="Glavina del Rio T."/>
            <person name="Hammon N."/>
            <person name="Israni S."/>
            <person name="Dalin E."/>
            <person name="Tice H."/>
            <person name="Pitluck S."/>
            <person name="Chain P."/>
            <person name="Malfatti S."/>
            <person name="Shin M."/>
            <person name="Vergez L."/>
            <person name="Schmutz J."/>
            <person name="Larimer F."/>
            <person name="Land M."/>
            <person name="Hauser L."/>
            <person name="Kyrpides N."/>
            <person name="Kim E."/>
            <person name="Tiedje J."/>
            <person name="Richardson P."/>
        </authorList>
    </citation>
    <scope>NUCLEOTIDE SEQUENCE [LARGE SCALE GENOMIC DNA]</scope>
    <source>
        <strain>PRwf-1</strain>
    </source>
</reference>
<evidence type="ECO:0000255" key="1">
    <source>
        <dbReference type="HAMAP-Rule" id="MF_01150"/>
    </source>
</evidence>
<keyword id="KW-0143">Chaperone</keyword>
<keyword id="KW-0963">Cytoplasm</keyword>
<proteinExistence type="inferred from homology"/>
<accession>A5WBY3</accession>
<sequence length="221" mass="25280">MNNSQQWQAANTARAALYRWFAELFARELTKTNLTQLQAQYPSLHAAFSDLNLEPQSAALQTALENLQVIPAPDRALELAADFAHLFLLSGHQSAPPYASYYLESDQMLYGKPAQQMSEFLASHKLDLHPEFREPKDHLSIYLQVMSLWIKSSVDEQANLIEMAVQQQHFLEDALLSWLPKFAARCQHIRVKTQVYPAIIDLLLHFVQEDRQALEDMAEAE</sequence>
<comment type="function">
    <text evidence="1">Involved in the biogenesis of TorA. Acts on TorA before the insertion of the molybdenum cofactor and, as a result, probably favors a conformation of the apoenzyme that is competent for acquiring the cofactor.</text>
</comment>
<comment type="subcellular location">
    <subcellularLocation>
        <location evidence="1">Cytoplasm</location>
    </subcellularLocation>
</comment>
<comment type="similarity">
    <text evidence="1">Belongs to the TorD/DmsD family. TorD subfamily.</text>
</comment>
<protein>
    <recommendedName>
        <fullName evidence="1">Chaperone protein TorD</fullName>
    </recommendedName>
</protein>
<gene>
    <name evidence="1" type="primary">torD</name>
    <name type="ordered locus">PsycPRwf_0215</name>
</gene>